<dbReference type="EC" id="2.7.7.6"/>
<dbReference type="EMBL" id="AL590443">
    <property type="protein sequence ID" value="CAD26175.1"/>
    <property type="molecule type" value="Genomic_DNA"/>
</dbReference>
<dbReference type="RefSeq" id="NP_597540.1">
    <property type="nucleotide sequence ID" value="NM_001040904.1"/>
</dbReference>
<dbReference type="SMR" id="Q8SSC4"/>
<dbReference type="FunCoup" id="Q8SSC4">
    <property type="interactions" value="227"/>
</dbReference>
<dbReference type="STRING" id="284813.Q8SSC4"/>
<dbReference type="GeneID" id="858702"/>
<dbReference type="KEGG" id="ecu:ECU03_0290"/>
<dbReference type="VEuPathDB" id="MicrosporidiaDB:ECU03_0290"/>
<dbReference type="HOGENOM" id="CLU_000487_1_1_1"/>
<dbReference type="InParanoid" id="Q8SSC4"/>
<dbReference type="OMA" id="KPCMGIV"/>
<dbReference type="OrthoDB" id="270392at2759"/>
<dbReference type="Proteomes" id="UP000000819">
    <property type="component" value="Chromosome III"/>
</dbReference>
<dbReference type="GO" id="GO:0005739">
    <property type="term" value="C:mitochondrion"/>
    <property type="evidence" value="ECO:0007669"/>
    <property type="project" value="GOC"/>
</dbReference>
<dbReference type="GO" id="GO:0005665">
    <property type="term" value="C:RNA polymerase II, core complex"/>
    <property type="evidence" value="ECO:0007669"/>
    <property type="project" value="TreeGrafter"/>
</dbReference>
<dbReference type="GO" id="GO:0003677">
    <property type="term" value="F:DNA binding"/>
    <property type="evidence" value="ECO:0007669"/>
    <property type="project" value="UniProtKB-KW"/>
</dbReference>
<dbReference type="GO" id="GO:0003899">
    <property type="term" value="F:DNA-directed RNA polymerase activity"/>
    <property type="evidence" value="ECO:0007669"/>
    <property type="project" value="UniProtKB-EC"/>
</dbReference>
<dbReference type="GO" id="GO:0046872">
    <property type="term" value="F:metal ion binding"/>
    <property type="evidence" value="ECO:0007669"/>
    <property type="project" value="UniProtKB-KW"/>
</dbReference>
<dbReference type="GO" id="GO:0006366">
    <property type="term" value="P:transcription by RNA polymerase II"/>
    <property type="evidence" value="ECO:0007669"/>
    <property type="project" value="InterPro"/>
</dbReference>
<dbReference type="CDD" id="cd02584">
    <property type="entry name" value="RNAP_II_Rpb1_C"/>
    <property type="match status" value="1"/>
</dbReference>
<dbReference type="CDD" id="cd02733">
    <property type="entry name" value="RNAP_II_RPB1_N"/>
    <property type="match status" value="1"/>
</dbReference>
<dbReference type="FunFam" id="2.40.40.20:FF:000019">
    <property type="entry name" value="DNA-directed RNA polymerase II subunit RPB1"/>
    <property type="match status" value="1"/>
</dbReference>
<dbReference type="FunFam" id="1.10.132.30:FF:000001">
    <property type="entry name" value="DNA-directed RNA polymerase subunit"/>
    <property type="match status" value="1"/>
</dbReference>
<dbReference type="FunFam" id="1.10.150.390:FF:000001">
    <property type="entry name" value="DNA-directed RNA polymerase subunit"/>
    <property type="match status" value="1"/>
</dbReference>
<dbReference type="FunFam" id="4.10.860.120:FF:000003">
    <property type="entry name" value="DNA-directed RNA polymerase subunit"/>
    <property type="match status" value="1"/>
</dbReference>
<dbReference type="Gene3D" id="1.10.132.30">
    <property type="match status" value="1"/>
</dbReference>
<dbReference type="Gene3D" id="1.10.150.390">
    <property type="match status" value="1"/>
</dbReference>
<dbReference type="Gene3D" id="2.40.40.20">
    <property type="match status" value="1"/>
</dbReference>
<dbReference type="Gene3D" id="3.30.1360.140">
    <property type="match status" value="1"/>
</dbReference>
<dbReference type="Gene3D" id="6.10.250.2940">
    <property type="match status" value="1"/>
</dbReference>
<dbReference type="Gene3D" id="6.20.50.80">
    <property type="match status" value="1"/>
</dbReference>
<dbReference type="Gene3D" id="3.30.1490.180">
    <property type="entry name" value="RNA polymerase ii"/>
    <property type="match status" value="1"/>
</dbReference>
<dbReference type="Gene3D" id="4.10.860.120">
    <property type="entry name" value="RNA polymerase II, clamp domain"/>
    <property type="match status" value="2"/>
</dbReference>
<dbReference type="Gene3D" id="1.10.274.100">
    <property type="entry name" value="RNA polymerase Rpb1, domain 3"/>
    <property type="match status" value="1"/>
</dbReference>
<dbReference type="InterPro" id="IPR045867">
    <property type="entry name" value="DNA-dir_RpoC_beta_prime"/>
</dbReference>
<dbReference type="InterPro" id="IPR000722">
    <property type="entry name" value="RNA_pol_asu"/>
</dbReference>
<dbReference type="InterPro" id="IPR000684">
    <property type="entry name" value="RNA_pol_II_repeat_euk"/>
</dbReference>
<dbReference type="InterPro" id="IPR006592">
    <property type="entry name" value="RNA_pol_N"/>
</dbReference>
<dbReference type="InterPro" id="IPR007080">
    <property type="entry name" value="RNA_pol_Rpb1_1"/>
</dbReference>
<dbReference type="InterPro" id="IPR007066">
    <property type="entry name" value="RNA_pol_Rpb1_3"/>
</dbReference>
<dbReference type="InterPro" id="IPR042102">
    <property type="entry name" value="RNA_pol_Rpb1_3_sf"/>
</dbReference>
<dbReference type="InterPro" id="IPR007083">
    <property type="entry name" value="RNA_pol_Rpb1_4"/>
</dbReference>
<dbReference type="InterPro" id="IPR007081">
    <property type="entry name" value="RNA_pol_Rpb1_5"/>
</dbReference>
<dbReference type="InterPro" id="IPR007075">
    <property type="entry name" value="RNA_pol_Rpb1_6"/>
</dbReference>
<dbReference type="InterPro" id="IPR007073">
    <property type="entry name" value="RNA_pol_Rpb1_7"/>
</dbReference>
<dbReference type="InterPro" id="IPR038593">
    <property type="entry name" value="RNA_pol_Rpb1_7_sf"/>
</dbReference>
<dbReference type="InterPro" id="IPR044893">
    <property type="entry name" value="RNA_pol_Rpb1_clamp_domain"/>
</dbReference>
<dbReference type="InterPro" id="IPR038120">
    <property type="entry name" value="Rpb1_funnel_sf"/>
</dbReference>
<dbReference type="NCBIfam" id="NF006336">
    <property type="entry name" value="PRK08566.1"/>
    <property type="match status" value="1"/>
</dbReference>
<dbReference type="PANTHER" id="PTHR19376">
    <property type="entry name" value="DNA-DIRECTED RNA POLYMERASE"/>
    <property type="match status" value="1"/>
</dbReference>
<dbReference type="PANTHER" id="PTHR19376:SF37">
    <property type="entry name" value="DNA-DIRECTED RNA POLYMERASE II SUBUNIT RPB1"/>
    <property type="match status" value="1"/>
</dbReference>
<dbReference type="Pfam" id="PF04997">
    <property type="entry name" value="RNA_pol_Rpb1_1"/>
    <property type="match status" value="1"/>
</dbReference>
<dbReference type="Pfam" id="PF00623">
    <property type="entry name" value="RNA_pol_Rpb1_2"/>
    <property type="match status" value="1"/>
</dbReference>
<dbReference type="Pfam" id="PF04983">
    <property type="entry name" value="RNA_pol_Rpb1_3"/>
    <property type="match status" value="1"/>
</dbReference>
<dbReference type="Pfam" id="PF05000">
    <property type="entry name" value="RNA_pol_Rpb1_4"/>
    <property type="match status" value="1"/>
</dbReference>
<dbReference type="Pfam" id="PF04998">
    <property type="entry name" value="RNA_pol_Rpb1_5"/>
    <property type="match status" value="1"/>
</dbReference>
<dbReference type="Pfam" id="PF04992">
    <property type="entry name" value="RNA_pol_Rpb1_6"/>
    <property type="match status" value="2"/>
</dbReference>
<dbReference type="Pfam" id="PF04990">
    <property type="entry name" value="RNA_pol_Rpb1_7"/>
    <property type="match status" value="1"/>
</dbReference>
<dbReference type="Pfam" id="PF05001">
    <property type="entry name" value="RNA_pol_Rpb1_R"/>
    <property type="match status" value="11"/>
</dbReference>
<dbReference type="PRINTS" id="PR01217">
    <property type="entry name" value="PRICHEXTENSN"/>
</dbReference>
<dbReference type="SMART" id="SM00663">
    <property type="entry name" value="RPOLA_N"/>
    <property type="match status" value="1"/>
</dbReference>
<dbReference type="SUPFAM" id="SSF64484">
    <property type="entry name" value="beta and beta-prime subunits of DNA dependent RNA-polymerase"/>
    <property type="match status" value="1"/>
</dbReference>
<dbReference type="PROSITE" id="PS00115">
    <property type="entry name" value="RNA_POL_II_REPEAT"/>
    <property type="match status" value="14"/>
</dbReference>
<proteinExistence type="inferred from homology"/>
<reference key="1">
    <citation type="journal article" date="2001" name="Nature">
        <title>Genome sequence and gene compaction of the eukaryote parasite Encephalitozoon cuniculi.</title>
        <authorList>
            <person name="Katinka M.D."/>
            <person name="Duprat S."/>
            <person name="Cornillot E."/>
            <person name="Metenier G."/>
            <person name="Thomarat F."/>
            <person name="Prensier G."/>
            <person name="Barbe V."/>
            <person name="Peyretaillade E."/>
            <person name="Brottier P."/>
            <person name="Wincker P."/>
            <person name="Delbac F."/>
            <person name="El Alaoui H."/>
            <person name="Peyret P."/>
            <person name="Saurin W."/>
            <person name="Gouy M."/>
            <person name="Weissenbach J."/>
            <person name="Vivares C.P."/>
        </authorList>
    </citation>
    <scope>NUCLEOTIDE SEQUENCE [LARGE SCALE GENOMIC DNA]</scope>
    <source>
        <strain>GB-M1</strain>
    </source>
</reference>
<name>RPB1_ENCCU</name>
<accession>Q8SSC4</accession>
<gene>
    <name type="primary">RPB1</name>
    <name type="ordered locus">ECU03_0290</name>
</gene>
<feature type="chain" id="PRO_0000073943" description="DNA-directed RNA polymerase II subunit RPB1">
    <location>
        <begin position="1"/>
        <end position="1599"/>
    </location>
</feature>
<feature type="repeat" description="1">
    <location>
        <begin position="1473"/>
        <end position="1479"/>
    </location>
</feature>
<feature type="repeat" description="2">
    <location>
        <begin position="1480"/>
        <end position="1486"/>
    </location>
</feature>
<feature type="repeat" description="3">
    <location>
        <begin position="1487"/>
        <end position="1493"/>
    </location>
</feature>
<feature type="repeat" description="4">
    <location>
        <begin position="1494"/>
        <end position="1500"/>
    </location>
</feature>
<feature type="repeat" description="5">
    <location>
        <begin position="1501"/>
        <end position="1507"/>
    </location>
</feature>
<feature type="repeat" description="6">
    <location>
        <begin position="1508"/>
        <end position="1514"/>
    </location>
</feature>
<feature type="repeat" description="7">
    <location>
        <begin position="1515"/>
        <end position="1521"/>
    </location>
</feature>
<feature type="repeat" description="8">
    <location>
        <begin position="1522"/>
        <end position="1528"/>
    </location>
</feature>
<feature type="repeat" description="9">
    <location>
        <begin position="1529"/>
        <end position="1535"/>
    </location>
</feature>
<feature type="repeat" description="10">
    <location>
        <begin position="1536"/>
        <end position="1542"/>
    </location>
</feature>
<feature type="repeat" description="11">
    <location>
        <begin position="1543"/>
        <end position="1549"/>
    </location>
</feature>
<feature type="repeat" description="12">
    <location>
        <begin position="1550"/>
        <end position="1556"/>
    </location>
</feature>
<feature type="repeat" description="13">
    <location>
        <begin position="1557"/>
        <end position="1563"/>
    </location>
</feature>
<feature type="repeat" description="14">
    <location>
        <begin position="1564"/>
        <end position="1570"/>
    </location>
</feature>
<feature type="region of interest" description="Bridging helix">
    <location>
        <begin position="804"/>
        <end position="816"/>
    </location>
</feature>
<feature type="region of interest" description="Disordered" evidence="3">
    <location>
        <begin position="1424"/>
        <end position="1446"/>
    </location>
</feature>
<feature type="region of interest" description="Disordered" evidence="3">
    <location>
        <begin position="1464"/>
        <end position="1599"/>
    </location>
</feature>
<feature type="region of interest" description="C-terminal domain (CTD); 14 X 7 AA approximate tandem repeats of Y-S-P-[TS]-S-P-S">
    <location>
        <begin position="1473"/>
        <end position="1570"/>
    </location>
</feature>
<feature type="compositionally biased region" description="Low complexity" evidence="3">
    <location>
        <begin position="1435"/>
        <end position="1446"/>
    </location>
</feature>
<feature type="compositionally biased region" description="Low complexity" evidence="3">
    <location>
        <begin position="1467"/>
        <end position="1581"/>
    </location>
</feature>
<feature type="compositionally biased region" description="Basic and acidic residues" evidence="3">
    <location>
        <begin position="1585"/>
        <end position="1599"/>
    </location>
</feature>
<feature type="binding site" evidence="2">
    <location>
        <position position="61"/>
    </location>
    <ligand>
        <name>Zn(2+)</name>
        <dbReference type="ChEBI" id="CHEBI:29105"/>
        <label>1</label>
    </ligand>
</feature>
<feature type="binding site" evidence="2">
    <location>
        <position position="64"/>
    </location>
    <ligand>
        <name>Zn(2+)</name>
        <dbReference type="ChEBI" id="CHEBI:29105"/>
        <label>1</label>
    </ligand>
</feature>
<feature type="binding site" evidence="2">
    <location>
        <position position="71"/>
    </location>
    <ligand>
        <name>Zn(2+)</name>
        <dbReference type="ChEBI" id="CHEBI:29105"/>
        <label>1</label>
    </ligand>
</feature>
<feature type="binding site" evidence="2">
    <location>
        <position position="74"/>
    </location>
    <ligand>
        <name>Zn(2+)</name>
        <dbReference type="ChEBI" id="CHEBI:29105"/>
        <label>1</label>
    </ligand>
</feature>
<feature type="binding site" evidence="2">
    <location>
        <position position="101"/>
    </location>
    <ligand>
        <name>Zn(2+)</name>
        <dbReference type="ChEBI" id="CHEBI:29105"/>
        <label>2</label>
    </ligand>
</feature>
<feature type="binding site" evidence="2">
    <location>
        <position position="104"/>
    </location>
    <ligand>
        <name>Zn(2+)</name>
        <dbReference type="ChEBI" id="CHEBI:29105"/>
        <label>2</label>
    </ligand>
</feature>
<feature type="binding site" evidence="2">
    <location>
        <position position="131"/>
    </location>
    <ligand>
        <name>Zn(2+)</name>
        <dbReference type="ChEBI" id="CHEBI:29105"/>
        <label>2</label>
    </ligand>
</feature>
<feature type="binding site" evidence="2">
    <location>
        <position position="143"/>
    </location>
    <ligand>
        <name>Zn(2+)</name>
        <dbReference type="ChEBI" id="CHEBI:29105"/>
        <label>2</label>
    </ligand>
</feature>
<feature type="binding site" evidence="2">
    <location>
        <position position="450"/>
    </location>
    <ligand>
        <name>Mg(2+)</name>
        <dbReference type="ChEBI" id="CHEBI:18420"/>
        <label>1</label>
        <note>catalytic</note>
    </ligand>
</feature>
<feature type="binding site" evidence="2">
    <location>
        <position position="450"/>
    </location>
    <ligand>
        <name>Mg(2+)</name>
        <dbReference type="ChEBI" id="CHEBI:18420"/>
        <label>2</label>
        <note>ligand shared with RPB2</note>
    </ligand>
</feature>
<feature type="binding site" evidence="2">
    <location>
        <position position="452"/>
    </location>
    <ligand>
        <name>Mg(2+)</name>
        <dbReference type="ChEBI" id="CHEBI:18420"/>
        <label>1</label>
        <note>catalytic</note>
    </ligand>
</feature>
<feature type="binding site" evidence="2">
    <location>
        <position position="452"/>
    </location>
    <ligand>
        <name>Mg(2+)</name>
        <dbReference type="ChEBI" id="CHEBI:18420"/>
        <label>2</label>
        <note>ligand shared with RPB2</note>
    </ligand>
</feature>
<feature type="binding site" evidence="2">
    <location>
        <position position="454"/>
    </location>
    <ligand>
        <name>Mg(2+)</name>
        <dbReference type="ChEBI" id="CHEBI:18420"/>
        <label>1</label>
        <note>catalytic</note>
    </ligand>
</feature>
<keyword id="KW-0238">DNA-binding</keyword>
<keyword id="KW-0240">DNA-directed RNA polymerase</keyword>
<keyword id="KW-0460">Magnesium</keyword>
<keyword id="KW-0479">Metal-binding</keyword>
<keyword id="KW-0548">Nucleotidyltransferase</keyword>
<keyword id="KW-0539">Nucleus</keyword>
<keyword id="KW-0597">Phosphoprotein</keyword>
<keyword id="KW-1185">Reference proteome</keyword>
<keyword id="KW-0677">Repeat</keyword>
<keyword id="KW-0804">Transcription</keyword>
<keyword id="KW-0808">Transferase</keyword>
<keyword id="KW-0862">Zinc</keyword>
<sequence length="1599" mass="177716">MFEAKVKKQIKSIQFGLFSPDEVRNGSVALIVHPEVMEGGVPKTGGLIDLRMGTTDRMYLCQSCGGDNFSCPGHFGHIELTKPMFHVGYISKIKKVLECVCFYCSKIKIPRKGIKSTLSNVWGMSKGRSVCEGEVLDNGRSGCGNKQPVIKREGLTLVAFMKGEESNEGKVMLNGERVYSIFKKISDEDSVYMGFDLKYSRPEWMILTVLLVPPPAVRPSIVMEGSLRGEDDLTHKLADIIKSNGYLKKYEQEGAPGHIVRDYEQLLQFHVATFIDNDIGGLPQALQKSGRPLKSLSARLKGKEGRIRGNLMGKRVDFSARTVITPDPNISLEEVGVPLEIAKIHTFPEKVTSFNIDRLEKLVRAGPNEHPGANYVLRSDGQKIDLNFNRSDIRLEEGYVVERHMQSGDVVLFNRQPSLHKMSMMAHYARVMGNKTFRLNLSVTSPYNADFDGDEMNLHMPQSYTSKAELEELALVSRQIISPQSNKPVMGIVQDTLTGLRLFTLRDTFLNEREVMSLLYAVNLEFCDIPLGDAVQTGLRKGKDYDIMKILRKPAIAKPMRLWTGKQVLSFVLPNLNYIGLSSEHDDDDKENIGDTRVIIQDGYIHSGVIDKKAAGATQGGLVHIIFNDFGPKRAAQFFDGVQRMINAFMTGIHTFSMGIGDTIADPKTVKVVESAIRKAKEEVSALIENARQNRLERLPGMTMKESFESHLNLVLNRARDVSGTSAQRSLSENNNMKTMVLAGSKGSFINISQVTACVGQQNVEGKRIPFGFSHRTLPHFVKDDYTGKSRGFVENSYLTGLDPEEFFFHAMGGREGLIDTAIKTAETGYIQRRLVKALEDAIVRQDESVRSGNGLVYQIKYGEDGFDATFLESQKVDVKNFTKRYYIDMFGTEELEIKHGQVSEEVYGMLSSDVDLQKLLDQEYEWLVGEIFEGPPILSVGEVDIERDYKVRDIYQSAVMSPCNFTRILATAKRTFHLSTGDVSPYYILEAHKHLTTSNRILNVLIRTNLSVKRVLLEHRLNTEAFNWVVEVIDAKILKAKITPNEMVGTLAAQSVGEPATQMTLNTFHLAGVASTVTMGVPRLKEIFNVTKNLKTPSMKIYLDREHGKSIEAAKTIQNEIECLTVKDLCLFSEIYYDPEITGTEISDDKDFVEAYFEFPDEDVDFSCLSPFLMRLVVDRAKLVGRGINLEYVAMFIRKELGGGAHVICSDENAVNMVVRVRTTKSEDESLNFYTTALNSLLRLQLGGYKNVKKVYISEDKDRKEWYLQTDGICLSQILGNPAVNSRLTISNDLVEIAETLGIEAARESILRELTIVIDGNGSYVNYRHMSLLADVMTMRGYLCGITRHGVNKVGAGALKRSSFEETVEILLDAALVSEKNICRGITENIMMGQLAPMGTGNIEIMLDMKKLDKAIPLSNPVFKPNEPATPVISTPSSDSFSISSGNWSPTHLEMAYSRDLGERLSPTSPSYSPTSPSYSPTSPSYSPTSPSYSPTSPSYSPTSPSYSPTSPSYSPTSPSYSPTSPSYSPTSPSYSPTSPSYSPTSPSYSPTSPSYSPTSPSYSPTSPSYSVSMSSFSNKNKSKNQDGDKKRRNDGSF</sequence>
<organism>
    <name type="scientific">Encephalitozoon cuniculi (strain GB-M1)</name>
    <name type="common">Microsporidian parasite</name>
    <dbReference type="NCBI Taxonomy" id="284813"/>
    <lineage>
        <taxon>Eukaryota</taxon>
        <taxon>Fungi</taxon>
        <taxon>Fungi incertae sedis</taxon>
        <taxon>Microsporidia</taxon>
        <taxon>Unikaryonidae</taxon>
        <taxon>Encephalitozoon</taxon>
    </lineage>
</organism>
<protein>
    <recommendedName>
        <fullName>DNA-directed RNA polymerase II subunit RPB1</fullName>
        <shortName>RNA polymerase II subunit 1</shortName>
        <shortName>RNA polymerase II subunit B1</shortName>
        <ecNumber>2.7.7.6</ecNumber>
    </recommendedName>
    <alternativeName>
        <fullName>DNA-directed RNA polymerase III largest subunit</fullName>
    </alternativeName>
</protein>
<evidence type="ECO:0000250" key="1"/>
<evidence type="ECO:0000250" key="2">
    <source>
        <dbReference type="UniProtKB" id="P04050"/>
    </source>
</evidence>
<evidence type="ECO:0000256" key="3">
    <source>
        <dbReference type="SAM" id="MobiDB-lite"/>
    </source>
</evidence>
<evidence type="ECO:0000305" key="4"/>
<comment type="function">
    <text evidence="1">DNA-dependent RNA polymerase catalyzes the transcription of DNA into RNA using the four ribonucleoside triphosphates as substrates. Largest and catalytic component of RNA polymerase II which synthesizes mRNA precursors and many functional non-coding RNAs. Forms the polymerase active center together with the second largest subunit. Pol II is the central component of the basal RNA polymerase II transcription machinery. It is composed of mobile elements that move relative to each other. RPB1 is part of the core element with the central large cleft, the clamp element that moves to open and close the cleft and the jaws that are thought to grab the incoming DNA template. At the start of transcription, a single-stranded DNA template strand of the promoter is positioned within the central active site cleft of Pol II. A bridging helix emanates from RPB1 and crosses the cleft near the catalytic site and is thought to promote translocation of Pol II by acting as a ratchet that moves the RNA-DNA hybrid through the active site by switching from straight to bent conformations at each step of nucleotide addition. During transcription elongation, Pol II moves on the template as the transcript elongates. Elongation is influenced by the phosphorylation status of the C-terminal domain (CTD) of Pol II largest subunit (RPB1), which serves as a platform for assembly of factors that regulate transcription initiation, elongation, termination and mRNA processing (By similarity).</text>
</comment>
<comment type="catalytic activity">
    <reaction>
        <text>RNA(n) + a ribonucleoside 5'-triphosphate = RNA(n+1) + diphosphate</text>
        <dbReference type="Rhea" id="RHEA:21248"/>
        <dbReference type="Rhea" id="RHEA-COMP:14527"/>
        <dbReference type="Rhea" id="RHEA-COMP:17342"/>
        <dbReference type="ChEBI" id="CHEBI:33019"/>
        <dbReference type="ChEBI" id="CHEBI:61557"/>
        <dbReference type="ChEBI" id="CHEBI:140395"/>
        <dbReference type="EC" id="2.7.7.6"/>
    </reaction>
</comment>
<comment type="subunit">
    <text evidence="1">Component of the RNA polymerase II (Pol II) complex consisting of 12 subunits.</text>
</comment>
<comment type="subcellular location">
    <subcellularLocation>
        <location evidence="2">Nucleus</location>
    </subcellularLocation>
</comment>
<comment type="domain">
    <text evidence="4">The C-terminal domain (CTD) serves as a platform for assembly of factors that regulate transcription initiation, elongation, termination and mRNA processing.</text>
</comment>
<comment type="PTM">
    <text evidence="1">The tandem 7 residues repeats in the C-terminal domain (CTD) can be highly phosphorylated. The phosphorylation activates Pol II. Phosphorylation occurs mainly at residues 'Ser-2' and 'Ser-5' of the heptapeptide repeat. The phosphorylation state is believed to result from the balanced action of site-specific CTD kinases and phosphatase, and a 'CTD code' that specifies the position of Pol II within the transcription cycle has been proposed (By similarity).</text>
</comment>
<comment type="miscellaneous">
    <text>The binding of ribonucleoside triphosphate to the RNA polymerase II transcribing complex probably involves a two-step mechanism. The initial binding seems to occur at the entry (E) site and involves a magnesium ion temporarily coordinated by three conserved aspartate residues of the two largest RNA Pol II subunits. The ribonucleoside triphosphate is transferred by a rotation to the nucleotide addition (A) site for pairing with the template DNA. The catalytic A site involves three conserved aspartate residues of the RNA Pol II largest subunit which permanently coordinate a second magnesium ion.</text>
</comment>
<comment type="similarity">
    <text evidence="4">Belongs to the RNA polymerase beta' chain family.</text>
</comment>